<accession>Q38621</accession>
<comment type="function">
    <text evidence="1 2 3">Trans-acting positive regulator required for mom mRNA translation. Binds the com-mom mRNA 5' and destabilizes a translation inhibition stem to expose mom translation start signals.</text>
</comment>
<comment type="cofactor">
    <cofactor evidence="2 4">
        <name>Zn(2+)</name>
        <dbReference type="ChEBI" id="CHEBI:29105"/>
    </cofactor>
    <text evidence="2 4">One Zn(2+) per molecule.</text>
</comment>
<comment type="subcellular location">
    <subcellularLocation>
        <location evidence="6">Host cytoplasm</location>
    </subcellularLocation>
</comment>
<comment type="induction">
    <text evidence="5">Expressed in the late phase of the viral replicative cycle. Expression of late genes is activated by the viral late transcription activator C.</text>
</comment>
<comment type="similarity">
    <text evidence="6">Belongs to the com family.</text>
</comment>
<protein>
    <recommendedName>
        <fullName>Translational activator com</fullName>
    </recommendedName>
    <alternativeName>
        <fullName>Gene product 54</fullName>
        <shortName>gp54</shortName>
    </alternativeName>
    <alternativeName>
        <fullName>Gene product com</fullName>
        <shortName>gpCom</shortName>
    </alternativeName>
</protein>
<proteinExistence type="evidence at protein level"/>
<sequence length="62" mass="7414">MKSIRCKNCNKLLFKADSFDHIEIRCPRCKRHIIMLNACEHPTEKHCGKREKITHSDETVRY</sequence>
<reference key="1">
    <citation type="journal article" date="1983" name="Cold Spring Harb. Symp. Quant. Biol.">
        <title>Methylation regulates the expression of a DNA-modification function encoded by bacteriophage Mu.</title>
        <authorList>
            <person name="Kahmann R."/>
        </authorList>
    </citation>
    <scope>NUCLEOTIDE SEQUENCE [GENOMIC DNA]</scope>
</reference>
<reference key="2">
    <citation type="journal article" date="2002" name="J. Mol. Biol.">
        <title>Bacteriophage Mu genome sequence: analysis and comparison with Mu-like prophages in Haemophilus, Neisseria and Deinococcus.</title>
        <authorList>
            <person name="Morgan G.J."/>
            <person name="Hatfull G.F."/>
            <person name="Casjens S."/>
            <person name="Hendrix R.W."/>
        </authorList>
    </citation>
    <scope>NUCLEOTIDE SEQUENCE [LARGE SCALE GENOMIC DNA]</scope>
</reference>
<reference key="3">
    <citation type="journal article" date="1989" name="Cell">
        <title>Translation of the bacteriophage Mu mom gene is positively regulated by the phage com gene product.</title>
        <authorList>
            <person name="Wulczyn F.G."/>
            <person name="Bolker M."/>
            <person name="Kahmann R."/>
        </authorList>
    </citation>
    <scope>FUNCTION</scope>
</reference>
<reference key="4">
    <citation type="journal article" date="1991" name="Cell">
        <title>Translational stimulation: RNA sequence and structure requirements for binding of Com protein.</title>
        <authorList>
            <person name="Wulczyn F.G."/>
            <person name="Kahmann R."/>
        </authorList>
    </citation>
    <scope>FUNCTION</scope>
</reference>
<reference key="5">
    <citation type="journal article" date="1991" name="Proc. Natl. Acad. Sci. U.S.A.">
        <title>Com, the phage Mu mom translational activator, is a zinc-binding protein that binds specifically to its cognate mRNA.</title>
        <authorList>
            <person name="Hattman S."/>
            <person name="Newman L."/>
            <person name="Murthy H.M."/>
            <person name="Nagaraja V."/>
        </authorList>
    </citation>
    <scope>FUNCTION</scope>
    <scope>COFACTOR</scope>
</reference>
<reference key="6">
    <citation type="journal article" date="1993" name="Genetics">
        <title>Mutational analysis of a C-dependent late promoter of bacteriophage Mu.</title>
        <authorList>
            <person name="Chiang L.W."/>
            <person name="Howe M.M."/>
        </authorList>
    </citation>
    <scope>INDUCTION</scope>
</reference>
<reference key="7">
    <citation type="journal article" date="1995" name="J. Mol. Biol.">
        <title>The zinc coordination site of the bacteriophage Mu translational activator protein, Com.</title>
        <authorList>
            <person name="Witkowski R.T."/>
            <person name="Hattman S."/>
            <person name="Newman L."/>
            <person name="Clark K."/>
            <person name="Tierney D.L."/>
            <person name="Penner-Hahn J."/>
            <person name="McLendon G."/>
        </authorList>
    </citation>
    <scope>COFACTOR</scope>
    <scope>MUTAGENESIS OF CYS-6; CYS-9; CYS-26; CYS-29; CYS-39 AND CYS-47</scope>
</reference>
<reference key="8">
    <citation type="journal article" date="1999" name="Pharmacol. Ther.">
        <title>Unusual transcriptional and translational regulation of the bacteriophage Mu mom operon.</title>
        <authorList>
            <person name="Hattman S."/>
        </authorList>
    </citation>
    <scope>REVIEW</scope>
</reference>
<organism>
    <name type="scientific">Escherichia phage Mu</name>
    <name type="common">Bacteriophage Mu</name>
    <dbReference type="NCBI Taxonomy" id="2681603"/>
    <lineage>
        <taxon>Viruses</taxon>
        <taxon>Duplodnaviria</taxon>
        <taxon>Heunggongvirae</taxon>
        <taxon>Uroviricota</taxon>
        <taxon>Caudoviricetes</taxon>
        <taxon>Muvirus</taxon>
        <taxon>Muvirus mu</taxon>
    </lineage>
</organism>
<gene>
    <name type="primary">com</name>
    <name type="ordered locus">Mup54</name>
</gene>
<evidence type="ECO:0000269" key="1">
    <source>
    </source>
</evidence>
<evidence type="ECO:0000269" key="2">
    <source>
    </source>
</evidence>
<evidence type="ECO:0000269" key="3">
    <source>
    </source>
</evidence>
<evidence type="ECO:0000269" key="4">
    <source>
    </source>
</evidence>
<evidence type="ECO:0000269" key="5">
    <source>
    </source>
</evidence>
<evidence type="ECO:0000305" key="6"/>
<name>COM_BPMU</name>
<keyword id="KW-0010">Activator</keyword>
<keyword id="KW-1035">Host cytoplasm</keyword>
<keyword id="KW-0426">Late protein</keyword>
<keyword id="KW-0479">Metal-binding</keyword>
<keyword id="KW-1185">Reference proteome</keyword>
<keyword id="KW-0804">Transcription</keyword>
<keyword id="KW-0805">Transcription regulation</keyword>
<keyword id="KW-0862">Zinc</keyword>
<keyword id="KW-0863">Zinc-finger</keyword>
<dbReference type="EMBL" id="V01463">
    <property type="protein sequence ID" value="CAA24709.1"/>
    <property type="molecule type" value="Genomic_DNA"/>
</dbReference>
<dbReference type="EMBL" id="AF083977">
    <property type="protein sequence ID" value="AAF01130.1"/>
    <property type="molecule type" value="Genomic_DNA"/>
</dbReference>
<dbReference type="RefSeq" id="NP_050656.1">
    <property type="nucleotide sequence ID" value="NC_000929.1"/>
</dbReference>
<dbReference type="GeneID" id="2636254"/>
<dbReference type="KEGG" id="vg:2636254"/>
<dbReference type="Proteomes" id="UP000002611">
    <property type="component" value="Genome"/>
</dbReference>
<dbReference type="GO" id="GO:0030430">
    <property type="term" value="C:host cell cytoplasm"/>
    <property type="evidence" value="ECO:0007669"/>
    <property type="project" value="UniProtKB-SubCell"/>
</dbReference>
<dbReference type="GO" id="GO:0008270">
    <property type="term" value="F:zinc ion binding"/>
    <property type="evidence" value="ECO:0007669"/>
    <property type="project" value="UniProtKB-KW"/>
</dbReference>
<dbReference type="InterPro" id="IPR019294">
    <property type="entry name" value="Translation_reg_Com"/>
</dbReference>
<dbReference type="Pfam" id="PF10122">
    <property type="entry name" value="Zn_ribbon_Com"/>
    <property type="match status" value="1"/>
</dbReference>
<feature type="chain" id="PRO_0000077659" description="Translational activator com">
    <location>
        <begin position="1"/>
        <end position="62"/>
    </location>
</feature>
<feature type="zinc finger region" description="Atypical" evidence="6">
    <location>
        <begin position="6"/>
        <end position="29"/>
    </location>
</feature>
<feature type="binding site" evidence="6">
    <location>
        <position position="6"/>
    </location>
    <ligand>
        <name>Zn(2+)</name>
        <dbReference type="ChEBI" id="CHEBI:29105"/>
    </ligand>
</feature>
<feature type="binding site" evidence="6">
    <location>
        <position position="9"/>
    </location>
    <ligand>
        <name>Zn(2+)</name>
        <dbReference type="ChEBI" id="CHEBI:29105"/>
    </ligand>
</feature>
<feature type="binding site" evidence="6">
    <location>
        <position position="26"/>
    </location>
    <ligand>
        <name>Zn(2+)</name>
        <dbReference type="ChEBI" id="CHEBI:29105"/>
    </ligand>
</feature>
<feature type="binding site" evidence="6">
    <location>
        <position position="29"/>
    </location>
    <ligand>
        <name>Zn(2+)</name>
        <dbReference type="ChEBI" id="CHEBI:29105"/>
    </ligand>
</feature>
<feature type="mutagenesis site" description="Loss of transactivation ability." evidence="4">
    <original>C</original>
    <variation>S</variation>
    <location>
        <position position="6"/>
    </location>
</feature>
<feature type="mutagenesis site" description="Loss of transactivation ability." evidence="4">
    <original>C</original>
    <variation>S</variation>
    <location>
        <position position="9"/>
    </location>
</feature>
<feature type="mutagenesis site" description="Loss of transactivation ability." evidence="4">
    <original>C</original>
    <variation>S</variation>
    <location>
        <position position="26"/>
    </location>
</feature>
<feature type="mutagenesis site" description="Loss of transactivation ability." evidence="4">
    <original>C</original>
    <variation>S</variation>
    <location>
        <position position="29"/>
    </location>
</feature>
<feature type="mutagenesis site" description="No effect on transactivation ability." evidence="4">
    <original>C</original>
    <variation>S</variation>
    <location>
        <position position="39"/>
    </location>
</feature>
<feature type="mutagenesis site" description="No effect on transactivation ability." evidence="4">
    <original>C</original>
    <variation>S</variation>
    <location>
        <position position="47"/>
    </location>
</feature>
<organismHost>
    <name type="scientific">Enterobacteriaceae</name>
    <dbReference type="NCBI Taxonomy" id="543"/>
</organismHost>